<comment type="function">
    <text evidence="1">Catalyzes the ATP-dependent phosphorylation of N-acetyl-L-glutamate.</text>
</comment>
<comment type="catalytic activity">
    <reaction evidence="1">
        <text>N-acetyl-L-glutamate + ATP = N-acetyl-L-glutamyl 5-phosphate + ADP</text>
        <dbReference type="Rhea" id="RHEA:14629"/>
        <dbReference type="ChEBI" id="CHEBI:30616"/>
        <dbReference type="ChEBI" id="CHEBI:44337"/>
        <dbReference type="ChEBI" id="CHEBI:57936"/>
        <dbReference type="ChEBI" id="CHEBI:456216"/>
        <dbReference type="EC" id="2.7.2.8"/>
    </reaction>
</comment>
<comment type="pathway">
    <text evidence="1">Amino-acid biosynthesis; L-arginine biosynthesis; N(2)-acetyl-L-ornithine from L-glutamate: step 2/4.</text>
</comment>
<comment type="subunit">
    <text evidence="1">Homodimer.</text>
</comment>
<comment type="subcellular location">
    <subcellularLocation>
        <location evidence="1">Cytoplasm</location>
    </subcellularLocation>
</comment>
<comment type="similarity">
    <text evidence="1">Belongs to the acetylglutamate kinase family. ArgB subfamily.</text>
</comment>
<name>ARGB_PECAS</name>
<proteinExistence type="inferred from homology"/>
<keyword id="KW-0028">Amino-acid biosynthesis</keyword>
<keyword id="KW-0055">Arginine biosynthesis</keyword>
<keyword id="KW-0067">ATP-binding</keyword>
<keyword id="KW-0963">Cytoplasm</keyword>
<keyword id="KW-0418">Kinase</keyword>
<keyword id="KW-0547">Nucleotide-binding</keyword>
<keyword id="KW-1185">Reference proteome</keyword>
<keyword id="KW-0808">Transferase</keyword>
<feature type="chain" id="PRO_0000112617" description="Acetylglutamate kinase">
    <location>
        <begin position="1"/>
        <end position="257"/>
    </location>
</feature>
<feature type="binding site" evidence="1">
    <location>
        <begin position="43"/>
        <end position="44"/>
    </location>
    <ligand>
        <name>substrate</name>
    </ligand>
</feature>
<feature type="binding site" evidence="1">
    <location>
        <position position="65"/>
    </location>
    <ligand>
        <name>substrate</name>
    </ligand>
</feature>
<feature type="binding site" evidence="1">
    <location>
        <position position="157"/>
    </location>
    <ligand>
        <name>substrate</name>
    </ligand>
</feature>
<feature type="binding site" evidence="1">
    <location>
        <begin position="180"/>
        <end position="185"/>
    </location>
    <ligand>
        <name>ATP</name>
        <dbReference type="ChEBI" id="CHEBI:30616"/>
    </ligand>
</feature>
<feature type="binding site" evidence="1">
    <location>
        <begin position="208"/>
        <end position="210"/>
    </location>
    <ligand>
        <name>ATP</name>
        <dbReference type="ChEBI" id="CHEBI:30616"/>
    </ligand>
</feature>
<feature type="site" description="Transition state stabilizer" evidence="1">
    <location>
        <position position="7"/>
    </location>
</feature>
<feature type="site" description="Transition state stabilizer" evidence="1">
    <location>
        <position position="216"/>
    </location>
</feature>
<dbReference type="EC" id="2.7.2.8" evidence="1"/>
<dbReference type="EMBL" id="BX950851">
    <property type="protein sequence ID" value="CAG73112.1"/>
    <property type="molecule type" value="Genomic_DNA"/>
</dbReference>
<dbReference type="RefSeq" id="WP_011091832.1">
    <property type="nucleotide sequence ID" value="NC_004547.2"/>
</dbReference>
<dbReference type="SMR" id="Q6DAR0"/>
<dbReference type="STRING" id="218491.ECA0193"/>
<dbReference type="GeneID" id="57207050"/>
<dbReference type="KEGG" id="eca:ECA0193"/>
<dbReference type="PATRIC" id="fig|218491.5.peg.192"/>
<dbReference type="eggNOG" id="COG0548">
    <property type="taxonomic scope" value="Bacteria"/>
</dbReference>
<dbReference type="HOGENOM" id="CLU_053680_1_1_6"/>
<dbReference type="OrthoDB" id="5915023at2"/>
<dbReference type="UniPathway" id="UPA00068">
    <property type="reaction ID" value="UER00107"/>
</dbReference>
<dbReference type="Proteomes" id="UP000007966">
    <property type="component" value="Chromosome"/>
</dbReference>
<dbReference type="GO" id="GO:0005737">
    <property type="term" value="C:cytoplasm"/>
    <property type="evidence" value="ECO:0007669"/>
    <property type="project" value="UniProtKB-SubCell"/>
</dbReference>
<dbReference type="GO" id="GO:0003991">
    <property type="term" value="F:acetylglutamate kinase activity"/>
    <property type="evidence" value="ECO:0007669"/>
    <property type="project" value="UniProtKB-UniRule"/>
</dbReference>
<dbReference type="GO" id="GO:0005524">
    <property type="term" value="F:ATP binding"/>
    <property type="evidence" value="ECO:0007669"/>
    <property type="project" value="UniProtKB-UniRule"/>
</dbReference>
<dbReference type="GO" id="GO:0042450">
    <property type="term" value="P:arginine biosynthetic process via ornithine"/>
    <property type="evidence" value="ECO:0007669"/>
    <property type="project" value="UniProtKB-UniRule"/>
</dbReference>
<dbReference type="GO" id="GO:0006526">
    <property type="term" value="P:L-arginine biosynthetic process"/>
    <property type="evidence" value="ECO:0007669"/>
    <property type="project" value="UniProtKB-UniPathway"/>
</dbReference>
<dbReference type="CDD" id="cd04249">
    <property type="entry name" value="AAK_NAGK-NC"/>
    <property type="match status" value="1"/>
</dbReference>
<dbReference type="FunFam" id="3.40.1160.10:FF:000008">
    <property type="entry name" value="Acetylglutamate kinase"/>
    <property type="match status" value="1"/>
</dbReference>
<dbReference type="Gene3D" id="3.40.1160.10">
    <property type="entry name" value="Acetylglutamate kinase-like"/>
    <property type="match status" value="1"/>
</dbReference>
<dbReference type="HAMAP" id="MF_00082">
    <property type="entry name" value="ArgB"/>
    <property type="match status" value="1"/>
</dbReference>
<dbReference type="InterPro" id="IPR036393">
    <property type="entry name" value="AceGlu_kinase-like_sf"/>
</dbReference>
<dbReference type="InterPro" id="IPR004662">
    <property type="entry name" value="AcgluKinase_fam"/>
</dbReference>
<dbReference type="InterPro" id="IPR037528">
    <property type="entry name" value="ArgB"/>
</dbReference>
<dbReference type="InterPro" id="IPR001048">
    <property type="entry name" value="Asp/Glu/Uridylate_kinase"/>
</dbReference>
<dbReference type="InterPro" id="IPR041731">
    <property type="entry name" value="NAGK-NC"/>
</dbReference>
<dbReference type="NCBIfam" id="TIGR00761">
    <property type="entry name" value="argB"/>
    <property type="match status" value="1"/>
</dbReference>
<dbReference type="PANTHER" id="PTHR23342">
    <property type="entry name" value="N-ACETYLGLUTAMATE SYNTHASE"/>
    <property type="match status" value="1"/>
</dbReference>
<dbReference type="PANTHER" id="PTHR23342:SF0">
    <property type="entry name" value="N-ACETYLGLUTAMATE SYNTHASE, MITOCHONDRIAL"/>
    <property type="match status" value="1"/>
</dbReference>
<dbReference type="Pfam" id="PF00696">
    <property type="entry name" value="AA_kinase"/>
    <property type="match status" value="1"/>
</dbReference>
<dbReference type="PIRSF" id="PIRSF000728">
    <property type="entry name" value="NAGK"/>
    <property type="match status" value="1"/>
</dbReference>
<dbReference type="SUPFAM" id="SSF53633">
    <property type="entry name" value="Carbamate kinase-like"/>
    <property type="match status" value="1"/>
</dbReference>
<accession>Q6DAR0</accession>
<reference key="1">
    <citation type="journal article" date="2004" name="Proc. Natl. Acad. Sci. U.S.A.">
        <title>Genome sequence of the enterobacterial phytopathogen Erwinia carotovora subsp. atroseptica and characterization of virulence factors.</title>
        <authorList>
            <person name="Bell K.S."/>
            <person name="Sebaihia M."/>
            <person name="Pritchard L."/>
            <person name="Holden M.T.G."/>
            <person name="Hyman L.J."/>
            <person name="Holeva M.C."/>
            <person name="Thomson N.R."/>
            <person name="Bentley S.D."/>
            <person name="Churcher L.J.C."/>
            <person name="Mungall K."/>
            <person name="Atkin R."/>
            <person name="Bason N."/>
            <person name="Brooks K."/>
            <person name="Chillingworth T."/>
            <person name="Clark K."/>
            <person name="Doggett J."/>
            <person name="Fraser A."/>
            <person name="Hance Z."/>
            <person name="Hauser H."/>
            <person name="Jagels K."/>
            <person name="Moule S."/>
            <person name="Norbertczak H."/>
            <person name="Ormond D."/>
            <person name="Price C."/>
            <person name="Quail M.A."/>
            <person name="Sanders M."/>
            <person name="Walker D."/>
            <person name="Whitehead S."/>
            <person name="Salmond G.P.C."/>
            <person name="Birch P.R.J."/>
            <person name="Parkhill J."/>
            <person name="Toth I.K."/>
        </authorList>
    </citation>
    <scope>NUCLEOTIDE SEQUENCE [LARGE SCALE GENOMIC DNA]</scope>
    <source>
        <strain>SCRI 1043 / ATCC BAA-672</strain>
    </source>
</reference>
<evidence type="ECO:0000255" key="1">
    <source>
        <dbReference type="HAMAP-Rule" id="MF_00082"/>
    </source>
</evidence>
<organism>
    <name type="scientific">Pectobacterium atrosepticum (strain SCRI 1043 / ATCC BAA-672)</name>
    <name type="common">Erwinia carotovora subsp. atroseptica</name>
    <dbReference type="NCBI Taxonomy" id="218491"/>
    <lineage>
        <taxon>Bacteria</taxon>
        <taxon>Pseudomonadati</taxon>
        <taxon>Pseudomonadota</taxon>
        <taxon>Gammaproteobacteria</taxon>
        <taxon>Enterobacterales</taxon>
        <taxon>Pectobacteriaceae</taxon>
        <taxon>Pectobacterium</taxon>
    </lineage>
</organism>
<gene>
    <name evidence="1" type="primary">argB</name>
    <name type="ordered locus">ECA0193</name>
</gene>
<sequence length="257" mass="26742">MNPLIIKLGGVLLDSEEALERLFTALVAYRQEHQRPLVIVHGGGCLVDELMKKLSLPVVKKNGLRVTPADQIDIITGALAGSANKTLLSWAKKHDINAVGLCLGDGDSTTVTQLDESLGFVGKAEAGSPALLNTLLSAGYLPVVSSIGITAQGDLMNVNADQAATALAQTLGADLILLSDVSGILDGKGQRIAEMTAEKAEQLIAQGIITDGMIVKVNAALDAARALGRPVDIASWRHAEQLPALFSGVAIGTRILA</sequence>
<protein>
    <recommendedName>
        <fullName evidence="1">Acetylglutamate kinase</fullName>
        <ecNumber evidence="1">2.7.2.8</ecNumber>
    </recommendedName>
    <alternativeName>
        <fullName evidence="1">N-acetyl-L-glutamate 5-phosphotransferase</fullName>
    </alternativeName>
    <alternativeName>
        <fullName evidence="1">NAG kinase</fullName>
        <shortName evidence="1">NAGK</shortName>
    </alternativeName>
</protein>